<proteinExistence type="inferred from homology"/>
<sequence>MRSKFKDEHPFEKRKAEAERIRAKYADRIPVICEKVEKSDIATIDKKKYLVPADLTVGQFVYVIRKRIKLSPEKAIFIFVDEVLPPTAALMSSIYEEHKDEDGFLYITYSGENTFGDC</sequence>
<feature type="chain" id="PRO_0000017218" description="Autophagy-related protein 8">
    <location>
        <begin position="1"/>
        <end position="116"/>
    </location>
</feature>
<feature type="propeptide" id="PRO_0000017219" description="Removed in mature form" evidence="2">
    <location>
        <begin position="117"/>
        <end position="118"/>
    </location>
</feature>
<feature type="site" description="Cleavage; by ATG4" evidence="2">
    <location>
        <begin position="116"/>
        <end position="117"/>
    </location>
</feature>
<feature type="site" description="Cleavage; by atg4" evidence="1">
    <location>
        <begin position="116"/>
        <end position="117"/>
    </location>
</feature>
<feature type="lipid moiety-binding region" description="Phosphatidylethanolamine amidated glycine" evidence="2">
    <location>
        <position position="116"/>
    </location>
</feature>
<reference key="1">
    <citation type="journal article" date="2005" name="Nature">
        <title>Sequencing of Aspergillus nidulans and comparative analysis with A. fumigatus and A. oryzae.</title>
        <authorList>
            <person name="Galagan J.E."/>
            <person name="Calvo S.E."/>
            <person name="Cuomo C."/>
            <person name="Ma L.-J."/>
            <person name="Wortman J.R."/>
            <person name="Batzoglou S."/>
            <person name="Lee S.-I."/>
            <person name="Bastuerkmen M."/>
            <person name="Spevak C.C."/>
            <person name="Clutterbuck J."/>
            <person name="Kapitonov V."/>
            <person name="Jurka J."/>
            <person name="Scazzocchio C."/>
            <person name="Farman M.L."/>
            <person name="Butler J."/>
            <person name="Purcell S."/>
            <person name="Harris S."/>
            <person name="Braus G.H."/>
            <person name="Draht O."/>
            <person name="Busch S."/>
            <person name="D'Enfert C."/>
            <person name="Bouchier C."/>
            <person name="Goldman G.H."/>
            <person name="Bell-Pedersen D."/>
            <person name="Griffiths-Jones S."/>
            <person name="Doonan J.H."/>
            <person name="Yu J."/>
            <person name="Vienken K."/>
            <person name="Pain A."/>
            <person name="Freitag M."/>
            <person name="Selker E.U."/>
            <person name="Archer D.B."/>
            <person name="Penalva M.A."/>
            <person name="Oakley B.R."/>
            <person name="Momany M."/>
            <person name="Tanaka T."/>
            <person name="Kumagai T."/>
            <person name="Asai K."/>
            <person name="Machida M."/>
            <person name="Nierman W.C."/>
            <person name="Denning D.W."/>
            <person name="Caddick M.X."/>
            <person name="Hynes M."/>
            <person name="Paoletti M."/>
            <person name="Fischer R."/>
            <person name="Miller B.L."/>
            <person name="Dyer P.S."/>
            <person name="Sachs M.S."/>
            <person name="Osmani S.A."/>
            <person name="Birren B.W."/>
        </authorList>
    </citation>
    <scope>NUCLEOTIDE SEQUENCE [LARGE SCALE GENOMIC DNA]</scope>
    <source>
        <strain>FGSC A4 / ATCC 38163 / CBS 112.46 / NRRL 194 / M139</strain>
    </source>
</reference>
<reference key="2">
    <citation type="journal article" date="2009" name="Fungal Genet. Biol.">
        <title>The 2008 update of the Aspergillus nidulans genome annotation: a community effort.</title>
        <authorList>
            <person name="Wortman J.R."/>
            <person name="Gilsenan J.M."/>
            <person name="Joardar V."/>
            <person name="Deegan J."/>
            <person name="Clutterbuck J."/>
            <person name="Andersen M.R."/>
            <person name="Archer D."/>
            <person name="Bencina M."/>
            <person name="Braus G."/>
            <person name="Coutinho P."/>
            <person name="von Dohren H."/>
            <person name="Doonan J."/>
            <person name="Driessen A.J."/>
            <person name="Durek P."/>
            <person name="Espeso E."/>
            <person name="Fekete E."/>
            <person name="Flipphi M."/>
            <person name="Estrada C.G."/>
            <person name="Geysens S."/>
            <person name="Goldman G."/>
            <person name="de Groot P.W."/>
            <person name="Hansen K."/>
            <person name="Harris S.D."/>
            <person name="Heinekamp T."/>
            <person name="Helmstaedt K."/>
            <person name="Henrissat B."/>
            <person name="Hofmann G."/>
            <person name="Homan T."/>
            <person name="Horio T."/>
            <person name="Horiuchi H."/>
            <person name="James S."/>
            <person name="Jones M."/>
            <person name="Karaffa L."/>
            <person name="Karanyi Z."/>
            <person name="Kato M."/>
            <person name="Keller N."/>
            <person name="Kelly D.E."/>
            <person name="Kiel J.A."/>
            <person name="Kim J.M."/>
            <person name="van der Klei I.J."/>
            <person name="Klis F.M."/>
            <person name="Kovalchuk A."/>
            <person name="Krasevec N."/>
            <person name="Kubicek C.P."/>
            <person name="Liu B."/>
            <person name="Maccabe A."/>
            <person name="Meyer V."/>
            <person name="Mirabito P."/>
            <person name="Miskei M."/>
            <person name="Mos M."/>
            <person name="Mullins J."/>
            <person name="Nelson D.R."/>
            <person name="Nielsen J."/>
            <person name="Oakley B.R."/>
            <person name="Osmani S.A."/>
            <person name="Pakula T."/>
            <person name="Paszewski A."/>
            <person name="Paulsen I."/>
            <person name="Pilsyk S."/>
            <person name="Pocsi I."/>
            <person name="Punt P.J."/>
            <person name="Ram A.F."/>
            <person name="Ren Q."/>
            <person name="Robellet X."/>
            <person name="Robson G."/>
            <person name="Seiboth B."/>
            <person name="van Solingen P."/>
            <person name="Specht T."/>
            <person name="Sun J."/>
            <person name="Taheri-Talesh N."/>
            <person name="Takeshita N."/>
            <person name="Ussery D."/>
            <person name="vanKuyk P.A."/>
            <person name="Visser H."/>
            <person name="van de Vondervoort P.J."/>
            <person name="de Vries R.P."/>
            <person name="Walton J."/>
            <person name="Xiang X."/>
            <person name="Xiong Y."/>
            <person name="Zeng A.P."/>
            <person name="Brandt B.W."/>
            <person name="Cornell M.J."/>
            <person name="van den Hondel C.A."/>
            <person name="Visser J."/>
            <person name="Oliver S.G."/>
            <person name="Turner G."/>
        </authorList>
    </citation>
    <scope>GENOME REANNOTATION</scope>
    <source>
        <strain>FGSC A4 / ATCC 38163 / CBS 112.46 / NRRL 194 / M139</strain>
    </source>
</reference>
<reference key="3">
    <citation type="journal article" date="2013" name="Autophagy">
        <title>Live-cell imaging of Aspergillus nidulans autophagy: RAB1 dependence, Golgi independence and ER involvement.</title>
        <authorList>
            <person name="Pinar M."/>
            <person name="Pantazopoulou A."/>
            <person name="Penalva M.A."/>
        </authorList>
    </citation>
    <scope>SUBCELLULAR LOCATION</scope>
</reference>
<keyword id="KW-0072">Autophagy</keyword>
<keyword id="KW-0968">Cytoplasmic vesicle</keyword>
<keyword id="KW-0449">Lipoprotein</keyword>
<keyword id="KW-0472">Membrane</keyword>
<keyword id="KW-0653">Protein transport</keyword>
<keyword id="KW-1185">Reference proteome</keyword>
<keyword id="KW-0813">Transport</keyword>
<keyword id="KW-0833">Ubl conjugation pathway</keyword>
<keyword id="KW-0926">Vacuole</keyword>
<protein>
    <recommendedName>
        <fullName>Autophagy-related protein 8</fullName>
    </recommendedName>
    <alternativeName>
        <fullName>Autophagy-related ubiquitin-like modifier atg8</fullName>
    </alternativeName>
</protein>
<comment type="function">
    <text evidence="2">Ubiquitin-like modifier involved in autophagosome formation. With atg4, mediates the delivery of the autophagosomes to the vacuole via the microtubule cytoskeleton. Required for selective autophagic degradation of the nucleus (nucleophagy) as well as for mitophagy which contributes to regulate mitochondrial quantity and quality by eliminating the mitochondria to a basal level to fulfill cellular energy requirements and preventing excess ROS production. Participates also in membrane fusion events that take place in the early secretory pathway. Also involved in endoplasmic reticulum-specific autophagic process and is essential for the survival of cells subjected to severe ER stress. The atg8-PE conjugate mediates tethering between adjacent membranes and stimulates membrane hemifusion, leading to expansion of the autophagosomal membrane during autophagy.</text>
</comment>
<comment type="subcellular location">
    <subcellularLocation>
        <location evidence="3">Cytoplasmic vesicle</location>
        <location evidence="3">Autophagosome membrane</location>
        <topology evidence="3">Lipid-anchor</topology>
    </subcellularLocation>
    <subcellularLocation>
        <location evidence="2">Vacuole membrane</location>
        <topology evidence="2">Lipid-anchor</topology>
    </subcellularLocation>
    <subcellularLocation>
        <location evidence="3">Preautophagosomal structure membrane</location>
        <topology evidence="3">Lipid-anchor</topology>
    </subcellularLocation>
</comment>
<comment type="PTM">
    <text evidence="2">The C-terminal 2 residues are removed by ATG4 to expose Gly-116 at the C-terminus. The C-terminal Gly is then amidated with phosphatidylethanolamine by an activating system similar to that for ubiquitin.</text>
</comment>
<comment type="similarity">
    <text evidence="4">Belongs to the ATG8 family.</text>
</comment>
<name>ATG8_EMENI</name>
<organism>
    <name type="scientific">Emericella nidulans (strain FGSC A4 / ATCC 38163 / CBS 112.46 / NRRL 194 / M139)</name>
    <name type="common">Aspergillus nidulans</name>
    <dbReference type="NCBI Taxonomy" id="227321"/>
    <lineage>
        <taxon>Eukaryota</taxon>
        <taxon>Fungi</taxon>
        <taxon>Dikarya</taxon>
        <taxon>Ascomycota</taxon>
        <taxon>Pezizomycotina</taxon>
        <taxon>Eurotiomycetes</taxon>
        <taxon>Eurotiomycetidae</taxon>
        <taxon>Eurotiales</taxon>
        <taxon>Aspergillaceae</taxon>
        <taxon>Aspergillus</taxon>
        <taxon>Aspergillus subgen. Nidulantes</taxon>
    </lineage>
</organism>
<dbReference type="EMBL" id="AACD01000088">
    <property type="protein sequence ID" value="EAA62312.1"/>
    <property type="molecule type" value="Genomic_DNA"/>
</dbReference>
<dbReference type="EMBL" id="BN001305">
    <property type="protein sequence ID" value="CBF80918.1"/>
    <property type="molecule type" value="Genomic_DNA"/>
</dbReference>
<dbReference type="RefSeq" id="XP_662735.1">
    <property type="nucleotide sequence ID" value="XM_657643.1"/>
</dbReference>
<dbReference type="SMR" id="Q5B2U9"/>
<dbReference type="FunCoup" id="Q5B2U9">
    <property type="interactions" value="532"/>
</dbReference>
<dbReference type="STRING" id="227321.Q5B2U9"/>
<dbReference type="EnsemblFungi" id="CBF80918">
    <property type="protein sequence ID" value="CBF80918"/>
    <property type="gene ID" value="ANIA_05131"/>
</dbReference>
<dbReference type="KEGG" id="ani:ANIA_05131"/>
<dbReference type="VEuPathDB" id="FungiDB:AN5131"/>
<dbReference type="eggNOG" id="KOG1654">
    <property type="taxonomic scope" value="Eukaryota"/>
</dbReference>
<dbReference type="HOGENOM" id="CLU_119276_0_1_1"/>
<dbReference type="InParanoid" id="Q5B2U9"/>
<dbReference type="OMA" id="AVYQEHK"/>
<dbReference type="OrthoDB" id="6738456at2759"/>
<dbReference type="Proteomes" id="UP000000560">
    <property type="component" value="Chromosome V"/>
</dbReference>
<dbReference type="GO" id="GO:0000421">
    <property type="term" value="C:autophagosome membrane"/>
    <property type="evidence" value="ECO:0000318"/>
    <property type="project" value="GO_Central"/>
</dbReference>
<dbReference type="GO" id="GO:0031410">
    <property type="term" value="C:cytoplasmic vesicle"/>
    <property type="evidence" value="ECO:0007669"/>
    <property type="project" value="UniProtKB-KW"/>
</dbReference>
<dbReference type="GO" id="GO:0000329">
    <property type="term" value="C:fungal-type vacuole membrane"/>
    <property type="evidence" value="ECO:0000318"/>
    <property type="project" value="GO_Central"/>
</dbReference>
<dbReference type="GO" id="GO:0034045">
    <property type="term" value="C:phagophore assembly site membrane"/>
    <property type="evidence" value="ECO:0007669"/>
    <property type="project" value="UniProtKB-SubCell"/>
</dbReference>
<dbReference type="GO" id="GO:0008429">
    <property type="term" value="F:phosphatidylethanolamine binding"/>
    <property type="evidence" value="ECO:0000318"/>
    <property type="project" value="GO_Central"/>
</dbReference>
<dbReference type="GO" id="GO:0000045">
    <property type="term" value="P:autophagosome assembly"/>
    <property type="evidence" value="ECO:0000318"/>
    <property type="project" value="GO_Central"/>
</dbReference>
<dbReference type="GO" id="GO:0097352">
    <property type="term" value="P:autophagosome maturation"/>
    <property type="evidence" value="ECO:0000318"/>
    <property type="project" value="GO_Central"/>
</dbReference>
<dbReference type="GO" id="GO:0006995">
    <property type="term" value="P:cellular response to nitrogen starvation"/>
    <property type="evidence" value="ECO:0000318"/>
    <property type="project" value="GO_Central"/>
</dbReference>
<dbReference type="GO" id="GO:0000423">
    <property type="term" value="P:mitophagy"/>
    <property type="evidence" value="ECO:0000318"/>
    <property type="project" value="GO_Central"/>
</dbReference>
<dbReference type="GO" id="GO:0015031">
    <property type="term" value="P:protein transport"/>
    <property type="evidence" value="ECO:0007669"/>
    <property type="project" value="UniProtKB-KW"/>
</dbReference>
<dbReference type="CDD" id="cd16128">
    <property type="entry name" value="Ubl_ATG8"/>
    <property type="match status" value="1"/>
</dbReference>
<dbReference type="FunFam" id="3.10.20.90:FF:000010">
    <property type="entry name" value="Autophagy-related protein"/>
    <property type="match status" value="1"/>
</dbReference>
<dbReference type="Gene3D" id="3.10.20.90">
    <property type="entry name" value="Phosphatidylinositol 3-kinase Catalytic Subunit, Chain A, domain 1"/>
    <property type="match status" value="1"/>
</dbReference>
<dbReference type="InterPro" id="IPR004241">
    <property type="entry name" value="Atg8-like"/>
</dbReference>
<dbReference type="InterPro" id="IPR029071">
    <property type="entry name" value="Ubiquitin-like_domsf"/>
</dbReference>
<dbReference type="PANTHER" id="PTHR10969">
    <property type="entry name" value="MICROTUBULE-ASSOCIATED PROTEINS 1A/1B LIGHT CHAIN 3-RELATED"/>
    <property type="match status" value="1"/>
</dbReference>
<dbReference type="Pfam" id="PF02991">
    <property type="entry name" value="ATG8"/>
    <property type="match status" value="1"/>
</dbReference>
<dbReference type="SUPFAM" id="SSF54236">
    <property type="entry name" value="Ubiquitin-like"/>
    <property type="match status" value="1"/>
</dbReference>
<evidence type="ECO:0000250" key="1"/>
<evidence type="ECO:0000250" key="2">
    <source>
        <dbReference type="UniProtKB" id="P38182"/>
    </source>
</evidence>
<evidence type="ECO:0000269" key="3">
    <source>
    </source>
</evidence>
<evidence type="ECO:0000305" key="4"/>
<gene>
    <name type="primary">atg8</name>
    <name type="ORF">AN5131</name>
</gene>
<accession>Q5B2U9</accession>
<accession>C8VEZ3</accession>